<keyword id="KW-0175">Coiled coil</keyword>
<keyword id="KW-0238">DNA-binding</keyword>
<keyword id="KW-0804">Transcription</keyword>
<keyword id="KW-0805">Transcription regulation</keyword>
<dbReference type="EMBL" id="AE015929">
    <property type="protein sequence ID" value="AAO04892.1"/>
    <property type="molecule type" value="Genomic_DNA"/>
</dbReference>
<dbReference type="RefSeq" id="NP_764848.1">
    <property type="nucleotide sequence ID" value="NC_004461.1"/>
</dbReference>
<dbReference type="RefSeq" id="WP_001830881.1">
    <property type="nucleotide sequence ID" value="NZ_WBME01000053.1"/>
</dbReference>
<dbReference type="SMR" id="Q8CSB3"/>
<dbReference type="GeneID" id="50018591"/>
<dbReference type="KEGG" id="sep:SE_1293"/>
<dbReference type="PATRIC" id="fig|176280.10.peg.1262"/>
<dbReference type="eggNOG" id="COG0782">
    <property type="taxonomic scope" value="Bacteria"/>
</dbReference>
<dbReference type="HOGENOM" id="CLU_101379_2_1_9"/>
<dbReference type="OrthoDB" id="9808774at2"/>
<dbReference type="Proteomes" id="UP000001411">
    <property type="component" value="Chromosome"/>
</dbReference>
<dbReference type="GO" id="GO:0003677">
    <property type="term" value="F:DNA binding"/>
    <property type="evidence" value="ECO:0007669"/>
    <property type="project" value="UniProtKB-UniRule"/>
</dbReference>
<dbReference type="GO" id="GO:0070063">
    <property type="term" value="F:RNA polymerase binding"/>
    <property type="evidence" value="ECO:0007669"/>
    <property type="project" value="InterPro"/>
</dbReference>
<dbReference type="GO" id="GO:0006354">
    <property type="term" value="P:DNA-templated transcription elongation"/>
    <property type="evidence" value="ECO:0007669"/>
    <property type="project" value="TreeGrafter"/>
</dbReference>
<dbReference type="GO" id="GO:0032784">
    <property type="term" value="P:regulation of DNA-templated transcription elongation"/>
    <property type="evidence" value="ECO:0007669"/>
    <property type="project" value="UniProtKB-UniRule"/>
</dbReference>
<dbReference type="FunFam" id="1.10.287.180:FF:000001">
    <property type="entry name" value="Transcription elongation factor GreA"/>
    <property type="match status" value="1"/>
</dbReference>
<dbReference type="FunFam" id="3.10.50.30:FF:000001">
    <property type="entry name" value="Transcription elongation factor GreA"/>
    <property type="match status" value="1"/>
</dbReference>
<dbReference type="Gene3D" id="3.10.50.30">
    <property type="entry name" value="Transcription elongation factor, GreA/GreB, C-terminal domain"/>
    <property type="match status" value="1"/>
</dbReference>
<dbReference type="Gene3D" id="1.10.287.180">
    <property type="entry name" value="Transcription elongation factor, GreA/GreB, N-terminal domain"/>
    <property type="match status" value="1"/>
</dbReference>
<dbReference type="HAMAP" id="MF_00105">
    <property type="entry name" value="GreA_GreB"/>
    <property type="match status" value="1"/>
</dbReference>
<dbReference type="InterPro" id="IPR036953">
    <property type="entry name" value="GreA/GreB_C_sf"/>
</dbReference>
<dbReference type="InterPro" id="IPR018151">
    <property type="entry name" value="TF_GreA/GreB_CS"/>
</dbReference>
<dbReference type="InterPro" id="IPR006359">
    <property type="entry name" value="Tscrpt_elong_fac_GreA"/>
</dbReference>
<dbReference type="InterPro" id="IPR028624">
    <property type="entry name" value="Tscrpt_elong_fac_GreA/B"/>
</dbReference>
<dbReference type="InterPro" id="IPR001437">
    <property type="entry name" value="Tscrpt_elong_fac_GreA/B_C"/>
</dbReference>
<dbReference type="InterPro" id="IPR023459">
    <property type="entry name" value="Tscrpt_elong_fac_GreA/B_fam"/>
</dbReference>
<dbReference type="InterPro" id="IPR022691">
    <property type="entry name" value="Tscrpt_elong_fac_GreA/B_N"/>
</dbReference>
<dbReference type="InterPro" id="IPR036805">
    <property type="entry name" value="Tscrpt_elong_fac_GreA/B_N_sf"/>
</dbReference>
<dbReference type="NCBIfam" id="TIGR01462">
    <property type="entry name" value="greA"/>
    <property type="match status" value="1"/>
</dbReference>
<dbReference type="NCBIfam" id="NF001261">
    <property type="entry name" value="PRK00226.1-2"/>
    <property type="match status" value="1"/>
</dbReference>
<dbReference type="NCBIfam" id="NF001263">
    <property type="entry name" value="PRK00226.1-4"/>
    <property type="match status" value="1"/>
</dbReference>
<dbReference type="PANTHER" id="PTHR30437">
    <property type="entry name" value="TRANSCRIPTION ELONGATION FACTOR GREA"/>
    <property type="match status" value="1"/>
</dbReference>
<dbReference type="PANTHER" id="PTHR30437:SF4">
    <property type="entry name" value="TRANSCRIPTION ELONGATION FACTOR GREA"/>
    <property type="match status" value="1"/>
</dbReference>
<dbReference type="Pfam" id="PF01272">
    <property type="entry name" value="GreA_GreB"/>
    <property type="match status" value="1"/>
</dbReference>
<dbReference type="Pfam" id="PF03449">
    <property type="entry name" value="GreA_GreB_N"/>
    <property type="match status" value="1"/>
</dbReference>
<dbReference type="PIRSF" id="PIRSF006092">
    <property type="entry name" value="GreA_GreB"/>
    <property type="match status" value="1"/>
</dbReference>
<dbReference type="SUPFAM" id="SSF54534">
    <property type="entry name" value="FKBP-like"/>
    <property type="match status" value="1"/>
</dbReference>
<dbReference type="SUPFAM" id="SSF46557">
    <property type="entry name" value="GreA transcript cleavage protein, N-terminal domain"/>
    <property type="match status" value="1"/>
</dbReference>
<dbReference type="PROSITE" id="PS00829">
    <property type="entry name" value="GREAB_1"/>
    <property type="match status" value="1"/>
</dbReference>
<dbReference type="PROSITE" id="PS00830">
    <property type="entry name" value="GREAB_2"/>
    <property type="match status" value="1"/>
</dbReference>
<proteinExistence type="inferred from homology"/>
<evidence type="ECO:0000255" key="1">
    <source>
        <dbReference type="HAMAP-Rule" id="MF_00105"/>
    </source>
</evidence>
<organism>
    <name type="scientific">Staphylococcus epidermidis (strain ATCC 12228 / FDA PCI 1200)</name>
    <dbReference type="NCBI Taxonomy" id="176280"/>
    <lineage>
        <taxon>Bacteria</taxon>
        <taxon>Bacillati</taxon>
        <taxon>Bacillota</taxon>
        <taxon>Bacilli</taxon>
        <taxon>Bacillales</taxon>
        <taxon>Staphylococcaceae</taxon>
        <taxon>Staphylococcus</taxon>
    </lineage>
</organism>
<name>GREA_STAES</name>
<accession>Q8CSB3</accession>
<protein>
    <recommendedName>
        <fullName evidence="1">Transcription elongation factor GreA</fullName>
    </recommendedName>
    <alternativeName>
        <fullName evidence="1">Transcript cleavage factor GreA</fullName>
    </alternativeName>
</protein>
<feature type="chain" id="PRO_0000176976" description="Transcription elongation factor GreA">
    <location>
        <begin position="1"/>
        <end position="158"/>
    </location>
</feature>
<feature type="coiled-coil region" evidence="1">
    <location>
        <begin position="2"/>
        <end position="70"/>
    </location>
</feature>
<comment type="function">
    <text evidence="1">Necessary for efficient RNA polymerase transcription elongation past template-encoded arresting sites. The arresting sites in DNA have the property of trapping a certain fraction of elongating RNA polymerases that pass through, resulting in locked ternary complexes. Cleavage of the nascent transcript by cleavage factors such as GreA or GreB allows the resumption of elongation from the new 3'terminus. GreA releases sequences of 2 to 3 nucleotides.</text>
</comment>
<comment type="similarity">
    <text evidence="1">Belongs to the GreA/GreB family.</text>
</comment>
<sequence>MENQKQYPMTQEGYEKLEQELEELKTVKRPEVVEKIKVARSFGDLSENSEYDAAKDEQGFIEQDIQRIEHMIRNALIIEDNGDNNVVQIGKTVTFIELPGDEEESYQIVGSAEADAFKGKISNESPMAKALIGKGLNDQVRVPLPNGGEMNVKIVEIK</sequence>
<reference key="1">
    <citation type="journal article" date="2003" name="Mol. Microbiol.">
        <title>Genome-based analysis of virulence genes in a non-biofilm-forming Staphylococcus epidermidis strain (ATCC 12228).</title>
        <authorList>
            <person name="Zhang Y.-Q."/>
            <person name="Ren S.-X."/>
            <person name="Li H.-L."/>
            <person name="Wang Y.-X."/>
            <person name="Fu G."/>
            <person name="Yang J."/>
            <person name="Qin Z.-Q."/>
            <person name="Miao Y.-G."/>
            <person name="Wang W.-Y."/>
            <person name="Chen R.-S."/>
            <person name="Shen Y."/>
            <person name="Chen Z."/>
            <person name="Yuan Z.-H."/>
            <person name="Zhao G.-P."/>
            <person name="Qu D."/>
            <person name="Danchin A."/>
            <person name="Wen Y.-M."/>
        </authorList>
    </citation>
    <scope>NUCLEOTIDE SEQUENCE [LARGE SCALE GENOMIC DNA]</scope>
    <source>
        <strain>ATCC 12228 / FDA PCI 1200</strain>
    </source>
</reference>
<gene>
    <name evidence="1" type="primary">greA</name>
    <name type="ordered locus">SE_1293</name>
</gene>